<proteinExistence type="evidence at protein level"/>
<protein>
    <recommendedName>
        <fullName evidence="1">Pyrokinin-5</fullName>
    </recommendedName>
    <alternativeName>
        <fullName evidence="1">FXPRL-amide</fullName>
    </alternativeName>
    <alternativeName>
        <fullName evidence="4">GroGr-Capa-PK</fullName>
    </alternativeName>
</protein>
<organism>
    <name type="scientific">Gromphadorhina grandidieri</name>
    <name type="common">Cockroach</name>
    <dbReference type="NCBI Taxonomy" id="521511"/>
    <lineage>
        <taxon>Eukaryota</taxon>
        <taxon>Metazoa</taxon>
        <taxon>Ecdysozoa</taxon>
        <taxon>Arthropoda</taxon>
        <taxon>Hexapoda</taxon>
        <taxon>Insecta</taxon>
        <taxon>Pterygota</taxon>
        <taxon>Neoptera</taxon>
        <taxon>Polyneoptera</taxon>
        <taxon>Dictyoptera</taxon>
        <taxon>Blattodea</taxon>
        <taxon>Blaberoidea</taxon>
        <taxon>Blaberidae</taxon>
        <taxon>Oxyhaloinae</taxon>
        <taxon>Gromphadorhina</taxon>
    </lineage>
</organism>
<comment type="function">
    <text evidence="1">Myoactive.</text>
</comment>
<comment type="subcellular location">
    <subcellularLocation>
        <location evidence="5">Secreted</location>
    </subcellularLocation>
</comment>
<comment type="similarity">
    <text evidence="2">Belongs to the pyrokinin family.</text>
</comment>
<evidence type="ECO:0000250" key="1">
    <source>
        <dbReference type="UniProtKB" id="P82617"/>
    </source>
</evidence>
<evidence type="ECO:0000255" key="2"/>
<evidence type="ECO:0000269" key="3">
    <source>
    </source>
</evidence>
<evidence type="ECO:0000303" key="4">
    <source>
    </source>
</evidence>
<evidence type="ECO:0000305" key="5"/>
<feature type="peptide" id="PRO_0000378695" description="Pyrokinin-5" evidence="3">
    <location>
        <begin position="1"/>
        <end position="17"/>
    </location>
</feature>
<feature type="modified residue" description="Leucine amide" evidence="3">
    <location>
        <position position="17"/>
    </location>
</feature>
<dbReference type="GO" id="GO:0005576">
    <property type="term" value="C:extracellular region"/>
    <property type="evidence" value="ECO:0007669"/>
    <property type="project" value="UniProtKB-SubCell"/>
</dbReference>
<dbReference type="GO" id="GO:0005184">
    <property type="term" value="F:neuropeptide hormone activity"/>
    <property type="evidence" value="ECO:0007669"/>
    <property type="project" value="InterPro"/>
</dbReference>
<dbReference type="GO" id="GO:0007218">
    <property type="term" value="P:neuropeptide signaling pathway"/>
    <property type="evidence" value="ECO:0007669"/>
    <property type="project" value="UniProtKB-KW"/>
</dbReference>
<dbReference type="InterPro" id="IPR001484">
    <property type="entry name" value="Pyrokinin_CS"/>
</dbReference>
<dbReference type="PROSITE" id="PS00539">
    <property type="entry name" value="PYROKININ"/>
    <property type="match status" value="1"/>
</dbReference>
<accession>P85638</accession>
<name>PPK5_GROGR</name>
<sequence>FGETSGETKGMWFGPRL</sequence>
<reference evidence="5" key="1">
    <citation type="journal article" date="2009" name="BMC Evol. Biol.">
        <title>A proteomic approach for studying insect phylogeny: CAPA peptides of ancient insect taxa (Dictyoptera, Blattoptera) as a test case.</title>
        <authorList>
            <person name="Roth S."/>
            <person name="Fromm B."/>
            <person name="Gaede G."/>
            <person name="Predel R."/>
        </authorList>
    </citation>
    <scope>PROTEIN SEQUENCE</scope>
    <scope>AMIDATION AT LEU-17</scope>
    <source>
        <tissue evidence="3">Abdominal perisympathetic organs</tissue>
    </source>
</reference>
<keyword id="KW-0027">Amidation</keyword>
<keyword id="KW-0903">Direct protein sequencing</keyword>
<keyword id="KW-0527">Neuropeptide</keyword>
<keyword id="KW-0964">Secreted</keyword>